<proteinExistence type="evidence at protein level"/>
<comment type="function">
    <text evidence="5 6 7 8">V region of the variable domain of immunoglobulin heavy chains that participates in the antigen recognition (PubMed:24600447). Immunoglobulins, also known as antibodies, are membrane-bound or secreted glycoproteins produced by B lymphocytes. In the recognition phase of humoral immunity, the membrane-bound immunoglobulins serve as receptors which, upon binding of a specific antigen, trigger the clonal expansion and differentiation of B lymphocytes into immunoglobulins-secreting plasma cells. Secreted immunoglobulins mediate the effector phase of humoral immunity, which results in the elimination of bound antigens (PubMed:20176268, PubMed:22158414). The antigen binding site is formed by the variable domain of one heavy chain, together with that of its associated light chain. Thus, each immunoglobulin has two antigen binding sites with remarkable affinity for a particular antigen. The variable domains are assembled by a process called V-(D)-J rearrangement and can then be subjected to somatic hypermutations which, after exposure to antigen and selection, allow affinity maturation for a particular antigen (PubMed:17576170, PubMed:20176268).</text>
</comment>
<comment type="subunit">
    <text evidence="6">Immunoglobulins are composed of two identical heavy chains and two identical light chains; disulfide-linked.</text>
</comment>
<comment type="subcellular location">
    <subcellularLocation>
        <location evidence="6 7">Secreted</location>
    </subcellularLocation>
    <subcellularLocation>
        <location evidence="6 7">Cell membrane</location>
    </subcellularLocation>
</comment>
<comment type="polymorphism">
    <text evidence="10">There are several alleles. The sequence shown is that of IMGT allele IGHV3-73*02.</text>
</comment>
<comment type="caution">
    <text evidence="10">For examples of full-length immunoglobulin heavy chains (of different isotypes) see AC P0DOX2, AC P0DOX3, AC P0DOX4, AC P0DOX5 and AC P0DOX6.</text>
</comment>
<name>HV373_HUMAN</name>
<organism>
    <name type="scientific">Homo sapiens</name>
    <name type="common">Human</name>
    <dbReference type="NCBI Taxonomy" id="9606"/>
    <lineage>
        <taxon>Eukaryota</taxon>
        <taxon>Metazoa</taxon>
        <taxon>Chordata</taxon>
        <taxon>Craniata</taxon>
        <taxon>Vertebrata</taxon>
        <taxon>Euteleostomi</taxon>
        <taxon>Mammalia</taxon>
        <taxon>Eutheria</taxon>
        <taxon>Euarchontoglires</taxon>
        <taxon>Primates</taxon>
        <taxon>Haplorrhini</taxon>
        <taxon>Catarrhini</taxon>
        <taxon>Hominidae</taxon>
        <taxon>Homo</taxon>
    </lineage>
</organism>
<gene>
    <name evidence="4 9" type="primary">IGHV3-73</name>
</gene>
<accession>A0A0B4J1V6</accession>
<protein>
    <recommendedName>
        <fullName evidence="4 9">Immunoglobulin heavy variable 3-73</fullName>
    </recommendedName>
</protein>
<evidence type="ECO:0000250" key="1">
    <source>
        <dbReference type="UniProtKB" id="P23083"/>
    </source>
</evidence>
<evidence type="ECO:0000255" key="2"/>
<evidence type="ECO:0000255" key="3">
    <source>
        <dbReference type="PROSITE-ProRule" id="PRU00114"/>
    </source>
</evidence>
<evidence type="ECO:0000303" key="4">
    <source>
    </source>
</evidence>
<evidence type="ECO:0000303" key="5">
    <source>
    </source>
</evidence>
<evidence type="ECO:0000303" key="6">
    <source>
    </source>
</evidence>
<evidence type="ECO:0000303" key="7">
    <source>
    </source>
</evidence>
<evidence type="ECO:0000303" key="8">
    <source>
    </source>
</evidence>
<evidence type="ECO:0000303" key="9">
    <source ref="3"/>
</evidence>
<evidence type="ECO:0000305" key="10"/>
<sequence length="119" mass="12858">MEFGLSWVFLVAILKGVQCEVQLVESGGGLVQPGGSLKLSCAASGFTFSGSAMHWVRQASGKGLEWVGRIRSKANSYATAYAASVKGRFTISRDDSKNTAYLQMNSLKTEDTAVYYCTR</sequence>
<feature type="signal peptide" evidence="2">
    <location>
        <begin position="1"/>
        <end position="19"/>
    </location>
</feature>
<feature type="chain" id="PRO_5007390941" description="Immunoglobulin heavy variable 3-73" evidence="2">
    <location>
        <begin position="20"/>
        <end position="119"/>
    </location>
</feature>
<feature type="domain" description="Ig-like" evidence="3">
    <location>
        <begin position="20"/>
        <end position="119" status="greater than"/>
    </location>
</feature>
<feature type="region of interest" description="Framework-1" evidence="1">
    <location>
        <begin position="20"/>
        <end position="44"/>
    </location>
</feature>
<feature type="region of interest" description="Complementarity-determining-1" evidence="1">
    <location>
        <begin position="45"/>
        <end position="52"/>
    </location>
</feature>
<feature type="region of interest" description="Framework-2" evidence="1">
    <location>
        <begin position="53"/>
        <end position="69"/>
    </location>
</feature>
<feature type="region of interest" description="Complementarity-determining-2" evidence="1">
    <location>
        <begin position="70"/>
        <end position="79"/>
    </location>
</feature>
<feature type="region of interest" description="Framework-3" evidence="1">
    <location>
        <begin position="80"/>
        <end position="117"/>
    </location>
</feature>
<feature type="region of interest" description="Complementarity-determining-3" evidence="1">
    <location>
        <begin position="118"/>
        <end position="119" status="greater than"/>
    </location>
</feature>
<feature type="disulfide bond" evidence="3">
    <location>
        <begin position="41"/>
        <end position="117"/>
    </location>
</feature>
<feature type="non-terminal residue">
    <location>
        <position position="119"/>
    </location>
</feature>
<dbReference type="EMBL" id="AC245023">
    <property type="status" value="NOT_ANNOTATED_CDS"/>
    <property type="molecule type" value="Genomic_DNA"/>
</dbReference>
<dbReference type="SMR" id="A0A0B4J1V6"/>
<dbReference type="FunCoup" id="A0A0B4J1V6">
    <property type="interactions" value="225"/>
</dbReference>
<dbReference type="IMGT_GENE-DB" id="IGHV3-73"/>
<dbReference type="BioMuta" id="IGHV3-73"/>
<dbReference type="MassIVE" id="A0A0B4J1V6"/>
<dbReference type="Ensembl" id="ENST00000390636.2">
    <property type="protein sequence ID" value="ENSP00000375045.2"/>
    <property type="gene ID" value="ENSG00000211976.2"/>
</dbReference>
<dbReference type="Ensembl" id="ENST00000631708.1">
    <property type="protein sequence ID" value="ENSP00000488432.1"/>
    <property type="gene ID" value="ENSG00000273539.3"/>
</dbReference>
<dbReference type="AGR" id="HGNC:5623"/>
<dbReference type="GeneCards" id="IGHV3-73"/>
<dbReference type="HGNC" id="HGNC:5623">
    <property type="gene designation" value="IGHV3-73"/>
</dbReference>
<dbReference type="HPA" id="ENSG00000211976">
    <property type="expression patterns" value="Tissue enhanced (intestine, urinary bladder)"/>
</dbReference>
<dbReference type="neXtProt" id="NX_A0A0B4J1V6"/>
<dbReference type="OpenTargets" id="ENSG00000211976"/>
<dbReference type="VEuPathDB" id="HostDB:ENSG00000211976"/>
<dbReference type="GeneTree" id="ENSGT01050000244871"/>
<dbReference type="HOGENOM" id="CLU_077975_5_2_1"/>
<dbReference type="InParanoid" id="A0A0B4J1V6"/>
<dbReference type="OMA" id="FSGSAMH"/>
<dbReference type="OrthoDB" id="9945861at2759"/>
<dbReference type="PAN-GO" id="A0A0B4J1V6">
    <property type="GO annotations" value="11 GO annotations based on evolutionary models"/>
</dbReference>
<dbReference type="PhylomeDB" id="A0A0B4J1V6"/>
<dbReference type="SignaLink" id="A0A0B4J1V6"/>
<dbReference type="Pharos" id="A0A0B4J1V6">
    <property type="development level" value="Tdark"/>
</dbReference>
<dbReference type="PRO" id="PR:A0A0B4J1V6"/>
<dbReference type="Proteomes" id="UP000005640">
    <property type="component" value="Chromosome 14"/>
</dbReference>
<dbReference type="RNAct" id="A0A0B4J1V6">
    <property type="molecule type" value="protein"/>
</dbReference>
<dbReference type="Bgee" id="ENSG00000211976">
    <property type="expression patterns" value="Expressed in duodenum and 87 other cell types or tissues"/>
</dbReference>
<dbReference type="GO" id="GO:0005576">
    <property type="term" value="C:extracellular region"/>
    <property type="evidence" value="ECO:0007669"/>
    <property type="project" value="UniProtKB-SubCell"/>
</dbReference>
<dbReference type="GO" id="GO:0019814">
    <property type="term" value="C:immunoglobulin complex"/>
    <property type="evidence" value="ECO:0007669"/>
    <property type="project" value="UniProtKB-KW"/>
</dbReference>
<dbReference type="GO" id="GO:0005886">
    <property type="term" value="C:plasma membrane"/>
    <property type="evidence" value="ECO:0007669"/>
    <property type="project" value="UniProtKB-SubCell"/>
</dbReference>
<dbReference type="GO" id="GO:0003823">
    <property type="term" value="F:antigen binding"/>
    <property type="evidence" value="ECO:0000318"/>
    <property type="project" value="GO_Central"/>
</dbReference>
<dbReference type="GO" id="GO:0016064">
    <property type="term" value="P:immunoglobulin mediated immune response"/>
    <property type="evidence" value="ECO:0000318"/>
    <property type="project" value="GO_Central"/>
</dbReference>
<dbReference type="FunFam" id="2.60.40.10:FF:002098">
    <property type="entry name" value="Immunoglobulin heavy variable 3-72"/>
    <property type="match status" value="1"/>
</dbReference>
<dbReference type="Gene3D" id="2.60.40.10">
    <property type="entry name" value="Immunoglobulins"/>
    <property type="match status" value="1"/>
</dbReference>
<dbReference type="InterPro" id="IPR007110">
    <property type="entry name" value="Ig-like_dom"/>
</dbReference>
<dbReference type="InterPro" id="IPR036179">
    <property type="entry name" value="Ig-like_dom_sf"/>
</dbReference>
<dbReference type="InterPro" id="IPR013783">
    <property type="entry name" value="Ig-like_fold"/>
</dbReference>
<dbReference type="InterPro" id="IPR013106">
    <property type="entry name" value="Ig_V-set"/>
</dbReference>
<dbReference type="InterPro" id="IPR050199">
    <property type="entry name" value="IgHV"/>
</dbReference>
<dbReference type="PANTHER" id="PTHR23266">
    <property type="entry name" value="IMMUNOGLOBULIN HEAVY CHAIN"/>
    <property type="match status" value="1"/>
</dbReference>
<dbReference type="Pfam" id="PF07686">
    <property type="entry name" value="V-set"/>
    <property type="match status" value="1"/>
</dbReference>
<dbReference type="SMART" id="SM00406">
    <property type="entry name" value="IGv"/>
    <property type="match status" value="1"/>
</dbReference>
<dbReference type="SUPFAM" id="SSF48726">
    <property type="entry name" value="Immunoglobulin"/>
    <property type="match status" value="1"/>
</dbReference>
<dbReference type="PROSITE" id="PS50835">
    <property type="entry name" value="IG_LIKE"/>
    <property type="match status" value="1"/>
</dbReference>
<keyword id="KW-1064">Adaptive immunity</keyword>
<keyword id="KW-1003">Cell membrane</keyword>
<keyword id="KW-1015">Disulfide bond</keyword>
<keyword id="KW-0391">Immunity</keyword>
<keyword id="KW-1280">Immunoglobulin</keyword>
<keyword id="KW-0393">Immunoglobulin domain</keyword>
<keyword id="KW-0472">Membrane</keyword>
<keyword id="KW-1267">Proteomics identification</keyword>
<keyword id="KW-1185">Reference proteome</keyword>
<keyword id="KW-0964">Secreted</keyword>
<keyword id="KW-0732">Signal</keyword>
<reference key="1">
    <citation type="journal article" date="2003" name="Nature">
        <title>The DNA sequence and analysis of human chromosome 14.</title>
        <authorList>
            <person name="Heilig R."/>
            <person name="Eckenberg R."/>
            <person name="Petit J.-L."/>
            <person name="Fonknechten N."/>
            <person name="Da Silva C."/>
            <person name="Cattolico L."/>
            <person name="Levy M."/>
            <person name="Barbe V."/>
            <person name="De Berardinis V."/>
            <person name="Ureta-Vidal A."/>
            <person name="Pelletier E."/>
            <person name="Vico V."/>
            <person name="Anthouard V."/>
            <person name="Rowen L."/>
            <person name="Madan A."/>
            <person name="Qin S."/>
            <person name="Sun H."/>
            <person name="Du H."/>
            <person name="Pepin K."/>
            <person name="Artiguenave F."/>
            <person name="Robert C."/>
            <person name="Cruaud C."/>
            <person name="Bruels T."/>
            <person name="Jaillon O."/>
            <person name="Friedlander L."/>
            <person name="Samson G."/>
            <person name="Brottier P."/>
            <person name="Cure S."/>
            <person name="Segurens B."/>
            <person name="Aniere F."/>
            <person name="Samain S."/>
            <person name="Crespeau H."/>
            <person name="Abbasi N."/>
            <person name="Aiach N."/>
            <person name="Boscus D."/>
            <person name="Dickhoff R."/>
            <person name="Dors M."/>
            <person name="Dubois I."/>
            <person name="Friedman C."/>
            <person name="Gouyvenoux M."/>
            <person name="James R."/>
            <person name="Madan A."/>
            <person name="Mairey-Estrada B."/>
            <person name="Mangenot S."/>
            <person name="Martins N."/>
            <person name="Menard M."/>
            <person name="Oztas S."/>
            <person name="Ratcliffe A."/>
            <person name="Shaffer T."/>
            <person name="Trask B."/>
            <person name="Vacherie B."/>
            <person name="Bellemere C."/>
            <person name="Belser C."/>
            <person name="Besnard-Gonnet M."/>
            <person name="Bartol-Mavel D."/>
            <person name="Boutard M."/>
            <person name="Briez-Silla S."/>
            <person name="Combette S."/>
            <person name="Dufosse-Laurent V."/>
            <person name="Ferron C."/>
            <person name="Lechaplais C."/>
            <person name="Louesse C."/>
            <person name="Muselet D."/>
            <person name="Magdelenat G."/>
            <person name="Pateau E."/>
            <person name="Petit E."/>
            <person name="Sirvain-Trukniewicz P."/>
            <person name="Trybou A."/>
            <person name="Vega-Czarny N."/>
            <person name="Bataille E."/>
            <person name="Bluet E."/>
            <person name="Bordelais I."/>
            <person name="Dubois M."/>
            <person name="Dumont C."/>
            <person name="Guerin T."/>
            <person name="Haffray S."/>
            <person name="Hammadi R."/>
            <person name="Muanga J."/>
            <person name="Pellouin V."/>
            <person name="Robert D."/>
            <person name="Wunderle E."/>
            <person name="Gauguet G."/>
            <person name="Roy A."/>
            <person name="Sainte-Marthe L."/>
            <person name="Verdier J."/>
            <person name="Verdier-Discala C."/>
            <person name="Hillier L.W."/>
            <person name="Fulton L."/>
            <person name="McPherson J."/>
            <person name="Matsuda F."/>
            <person name="Wilson R."/>
            <person name="Scarpelli C."/>
            <person name="Gyapay G."/>
            <person name="Wincker P."/>
            <person name="Saurin W."/>
            <person name="Quetier F."/>
            <person name="Waterston R."/>
            <person name="Hood L."/>
            <person name="Weissenbach J."/>
        </authorList>
    </citation>
    <scope>NUCLEOTIDE SEQUENCE [LARGE SCALE GENOMIC DNA] (IMGT ALLELE IGHV3-73*02)</scope>
</reference>
<reference key="2">
    <citation type="journal article" date="2001" name="Exp. Clin. Immunogenet.">
        <title>Nomenclature of the human immunoglobulin heavy (IGH) genes.</title>
        <authorList>
            <person name="Lefranc M.P."/>
        </authorList>
    </citation>
    <scope>NOMENCLATURE</scope>
</reference>
<reference key="3">
    <citation type="book" date="2001" name="The Immunoglobulin FactsBook.">
        <title>The Immunoglobulin FactsBook.</title>
        <editorList>
            <person name="Lefranc M.P."/>
            <person name="Lefranc G."/>
        </editorList>
        <authorList>
            <person name="Lefranc M.P."/>
            <person name="Lefranc G."/>
        </authorList>
    </citation>
    <scope>NOMENCLATURE</scope>
</reference>
<reference key="4">
    <citation type="journal article" date="2007" name="Annu. Rev. Genet.">
        <title>Immunoglobulin somatic hypermutation.</title>
        <authorList>
            <person name="Teng G."/>
            <person name="Papavasiliou F.N."/>
        </authorList>
    </citation>
    <scope>REVIEW ON SOMATIC HYPERMUTATION</scope>
</reference>
<reference key="5">
    <citation type="journal article" date="2010" name="J. Allergy Clin. Immunol.">
        <title>Structure and function of immunoglobulins.</title>
        <authorList>
            <person name="Schroeder H.W. Jr."/>
            <person name="Cavacini L."/>
        </authorList>
    </citation>
    <scope>REVIEW ON IMMUNOGLOBULINS</scope>
</reference>
<reference key="6">
    <citation type="journal article" date="2012" name="Nat. Rev. Immunol.">
        <title>Molecular programming of B cell memory.</title>
        <authorList>
            <person name="McHeyzer-Williams M."/>
            <person name="Okitsu S."/>
            <person name="Wang N."/>
            <person name="McHeyzer-Williams L."/>
        </authorList>
    </citation>
    <scope>REVIEW ON FUNCTION</scope>
</reference>
<reference key="7">
    <citation type="journal article" date="2014" name="Front. Immunol.">
        <title>Immunoglobulin and T Cell Receptor Genes: IMGT((R)) and the Birth and Rise of Immunoinformatics.</title>
        <authorList>
            <person name="Lefranc M.P."/>
        </authorList>
    </citation>
    <scope>NOMENCLATURE</scope>
</reference>